<dbReference type="EC" id="2.1.1.228" evidence="1"/>
<dbReference type="EMBL" id="AE017245">
    <property type="protein sequence ID" value="AAZ43433.2"/>
    <property type="molecule type" value="Genomic_DNA"/>
</dbReference>
<dbReference type="RefSeq" id="WP_020003046.1">
    <property type="nucleotide sequence ID" value="NC_007294.1"/>
</dbReference>
<dbReference type="SMR" id="Q4A738"/>
<dbReference type="STRING" id="262723.MS53_0011"/>
<dbReference type="GeneID" id="93529822"/>
<dbReference type="KEGG" id="msy:MS53_0011"/>
<dbReference type="eggNOG" id="COG0336">
    <property type="taxonomic scope" value="Bacteria"/>
</dbReference>
<dbReference type="HOGENOM" id="CLU_047363_0_1_14"/>
<dbReference type="OrthoDB" id="9807416at2"/>
<dbReference type="Proteomes" id="UP000000549">
    <property type="component" value="Chromosome"/>
</dbReference>
<dbReference type="GO" id="GO:0005829">
    <property type="term" value="C:cytosol"/>
    <property type="evidence" value="ECO:0007669"/>
    <property type="project" value="TreeGrafter"/>
</dbReference>
<dbReference type="GO" id="GO:0052906">
    <property type="term" value="F:tRNA (guanine(37)-N1)-methyltransferase activity"/>
    <property type="evidence" value="ECO:0007669"/>
    <property type="project" value="UniProtKB-UniRule"/>
</dbReference>
<dbReference type="GO" id="GO:0002939">
    <property type="term" value="P:tRNA N1-guanine methylation"/>
    <property type="evidence" value="ECO:0007669"/>
    <property type="project" value="TreeGrafter"/>
</dbReference>
<dbReference type="CDD" id="cd18080">
    <property type="entry name" value="TrmD-like"/>
    <property type="match status" value="1"/>
</dbReference>
<dbReference type="FunFam" id="3.40.1280.10:FF:000001">
    <property type="entry name" value="tRNA (guanine-N(1)-)-methyltransferase"/>
    <property type="match status" value="1"/>
</dbReference>
<dbReference type="Gene3D" id="3.40.1280.10">
    <property type="match status" value="1"/>
</dbReference>
<dbReference type="Gene3D" id="1.10.1270.20">
    <property type="entry name" value="tRNA(m1g37)methyltransferase, domain 2"/>
    <property type="match status" value="1"/>
</dbReference>
<dbReference type="HAMAP" id="MF_00605">
    <property type="entry name" value="TrmD"/>
    <property type="match status" value="1"/>
</dbReference>
<dbReference type="InterPro" id="IPR029028">
    <property type="entry name" value="Alpha/beta_knot_MTases"/>
</dbReference>
<dbReference type="InterPro" id="IPR023148">
    <property type="entry name" value="tRNA_m1G_MeTrfase_C_sf"/>
</dbReference>
<dbReference type="InterPro" id="IPR002649">
    <property type="entry name" value="tRNA_m1G_MeTrfase_TrmD"/>
</dbReference>
<dbReference type="InterPro" id="IPR029026">
    <property type="entry name" value="tRNA_m1G_MTases_N"/>
</dbReference>
<dbReference type="InterPro" id="IPR016009">
    <property type="entry name" value="tRNA_MeTrfase_TRMD/TRM10"/>
</dbReference>
<dbReference type="NCBIfam" id="NF000648">
    <property type="entry name" value="PRK00026.1"/>
    <property type="match status" value="1"/>
</dbReference>
<dbReference type="NCBIfam" id="TIGR00088">
    <property type="entry name" value="trmD"/>
    <property type="match status" value="1"/>
</dbReference>
<dbReference type="PANTHER" id="PTHR46417">
    <property type="entry name" value="TRNA (GUANINE-N(1)-)-METHYLTRANSFERASE"/>
    <property type="match status" value="1"/>
</dbReference>
<dbReference type="PANTHER" id="PTHR46417:SF1">
    <property type="entry name" value="TRNA (GUANINE-N(1)-)-METHYLTRANSFERASE"/>
    <property type="match status" value="1"/>
</dbReference>
<dbReference type="Pfam" id="PF01746">
    <property type="entry name" value="tRNA_m1G_MT"/>
    <property type="match status" value="1"/>
</dbReference>
<dbReference type="PIRSF" id="PIRSF000386">
    <property type="entry name" value="tRNA_mtase"/>
    <property type="match status" value="1"/>
</dbReference>
<dbReference type="SUPFAM" id="SSF75217">
    <property type="entry name" value="alpha/beta knot"/>
    <property type="match status" value="1"/>
</dbReference>
<protein>
    <recommendedName>
        <fullName evidence="1">tRNA (guanine-N(1)-)-methyltransferase</fullName>
        <ecNumber evidence="1">2.1.1.228</ecNumber>
    </recommendedName>
    <alternativeName>
        <fullName evidence="1">M1G-methyltransferase</fullName>
    </alternativeName>
    <alternativeName>
        <fullName evidence="1">tRNA [GM37] methyltransferase</fullName>
    </alternativeName>
</protein>
<name>TRMD_MYCS5</name>
<gene>
    <name evidence="1" type="primary">trmD</name>
    <name type="ordered locus">MS53_0011</name>
</gene>
<organism>
    <name type="scientific">Mycoplasmopsis synoviae (strain 53)</name>
    <name type="common">Mycoplasma synoviae</name>
    <dbReference type="NCBI Taxonomy" id="262723"/>
    <lineage>
        <taxon>Bacteria</taxon>
        <taxon>Bacillati</taxon>
        <taxon>Mycoplasmatota</taxon>
        <taxon>Mycoplasmoidales</taxon>
        <taxon>Metamycoplasmataceae</taxon>
        <taxon>Mycoplasmopsis</taxon>
    </lineage>
</organism>
<comment type="function">
    <text evidence="1">Specifically methylates guanosine-37 in various tRNAs.</text>
</comment>
<comment type="catalytic activity">
    <reaction evidence="1">
        <text>guanosine(37) in tRNA + S-adenosyl-L-methionine = N(1)-methylguanosine(37) in tRNA + S-adenosyl-L-homocysteine + H(+)</text>
        <dbReference type="Rhea" id="RHEA:36899"/>
        <dbReference type="Rhea" id="RHEA-COMP:10145"/>
        <dbReference type="Rhea" id="RHEA-COMP:10147"/>
        <dbReference type="ChEBI" id="CHEBI:15378"/>
        <dbReference type="ChEBI" id="CHEBI:57856"/>
        <dbReference type="ChEBI" id="CHEBI:59789"/>
        <dbReference type="ChEBI" id="CHEBI:73542"/>
        <dbReference type="ChEBI" id="CHEBI:74269"/>
        <dbReference type="EC" id="2.1.1.228"/>
    </reaction>
</comment>
<comment type="subunit">
    <text evidence="1">Homodimer.</text>
</comment>
<comment type="subcellular location">
    <subcellularLocation>
        <location evidence="1">Cytoplasm</location>
    </subcellularLocation>
</comment>
<comment type="similarity">
    <text evidence="1">Belongs to the RNA methyltransferase TrmD family.</text>
</comment>
<accession>Q4A738</accession>
<proteinExistence type="inferred from homology"/>
<feature type="chain" id="PRO_0000257436" description="tRNA (guanine-N(1)-)-methyltransferase">
    <location>
        <begin position="1"/>
        <end position="227"/>
    </location>
</feature>
<feature type="binding site" evidence="1">
    <location>
        <position position="110"/>
    </location>
    <ligand>
        <name>S-adenosyl-L-methionine</name>
        <dbReference type="ChEBI" id="CHEBI:59789"/>
    </ligand>
</feature>
<feature type="binding site" evidence="1">
    <location>
        <begin position="129"/>
        <end position="134"/>
    </location>
    <ligand>
        <name>S-adenosyl-L-methionine</name>
        <dbReference type="ChEBI" id="CHEBI:59789"/>
    </ligand>
</feature>
<sequence>MKINFLTLFPRYFEPLINESIIKKAVDKKILEFNVVDFRDFTKSKHRKVDDEIYGGGHGLLLQVEPIDLALDSLENRGGYKILVTPQGKIFDQKMANKLAKYDQITLISGRYEGFDERVTYLVDEEISIGDYVLTGGELPAMVIADSICRLVPGVIKKESVENDSFQNEGLLDYPQYTRPREYKNMKVPEVLFNGNHKEISEWKLKAQLEKTKKNRPDILERIKNEK</sequence>
<keyword id="KW-0963">Cytoplasm</keyword>
<keyword id="KW-0489">Methyltransferase</keyword>
<keyword id="KW-1185">Reference proteome</keyword>
<keyword id="KW-0949">S-adenosyl-L-methionine</keyword>
<keyword id="KW-0808">Transferase</keyword>
<keyword id="KW-0819">tRNA processing</keyword>
<evidence type="ECO:0000255" key="1">
    <source>
        <dbReference type="HAMAP-Rule" id="MF_00605"/>
    </source>
</evidence>
<reference key="1">
    <citation type="journal article" date="2005" name="J. Bacteriol.">
        <title>Swine and poultry pathogens: the complete genome sequences of two strains of Mycoplasma hyopneumoniae and a strain of Mycoplasma synoviae.</title>
        <authorList>
            <person name="Vasconcelos A.T.R."/>
            <person name="Ferreira H.B."/>
            <person name="Bizarro C.V."/>
            <person name="Bonatto S.L."/>
            <person name="Carvalho M.O."/>
            <person name="Pinto P.M."/>
            <person name="Almeida D.F."/>
            <person name="Almeida L.G.P."/>
            <person name="Almeida R."/>
            <person name="Alves-Junior L."/>
            <person name="Assuncao E.N."/>
            <person name="Azevedo V.A.C."/>
            <person name="Bogo M.R."/>
            <person name="Brigido M.M."/>
            <person name="Brocchi M."/>
            <person name="Burity H.A."/>
            <person name="Camargo A.A."/>
            <person name="Camargo S.S."/>
            <person name="Carepo M.S."/>
            <person name="Carraro D.M."/>
            <person name="de Mattos Cascardo J.C."/>
            <person name="Castro L.A."/>
            <person name="Cavalcanti G."/>
            <person name="Chemale G."/>
            <person name="Collevatti R.G."/>
            <person name="Cunha C.W."/>
            <person name="Dallagiovanna B."/>
            <person name="Dambros B.P."/>
            <person name="Dellagostin O.A."/>
            <person name="Falcao C."/>
            <person name="Fantinatti-Garboggini F."/>
            <person name="Felipe M.S.S."/>
            <person name="Fiorentin L."/>
            <person name="Franco G.R."/>
            <person name="Freitas N.S.A."/>
            <person name="Frias D."/>
            <person name="Grangeiro T.B."/>
            <person name="Grisard E.C."/>
            <person name="Guimaraes C.T."/>
            <person name="Hungria M."/>
            <person name="Jardim S.N."/>
            <person name="Krieger M.A."/>
            <person name="Laurino J.P."/>
            <person name="Lima L.F.A."/>
            <person name="Lopes M.I."/>
            <person name="Loreto E.L.S."/>
            <person name="Madeira H.M.F."/>
            <person name="Manfio G.P."/>
            <person name="Maranhao A.Q."/>
            <person name="Martinkovics C.T."/>
            <person name="Medeiros S.R.B."/>
            <person name="Moreira M.A.M."/>
            <person name="Neiva M."/>
            <person name="Ramalho-Neto C.E."/>
            <person name="Nicolas M.F."/>
            <person name="Oliveira S.C."/>
            <person name="Paixao R.F.C."/>
            <person name="Pedrosa F.O."/>
            <person name="Pena S.D.J."/>
            <person name="Pereira M."/>
            <person name="Pereira-Ferrari L."/>
            <person name="Piffer I."/>
            <person name="Pinto L.S."/>
            <person name="Potrich D.P."/>
            <person name="Salim A.C.M."/>
            <person name="Santos F.R."/>
            <person name="Schmitt R."/>
            <person name="Schneider M.P.C."/>
            <person name="Schrank A."/>
            <person name="Schrank I.S."/>
            <person name="Schuck A.F."/>
            <person name="Seuanez H.N."/>
            <person name="Silva D.W."/>
            <person name="Silva R."/>
            <person name="Silva S.C."/>
            <person name="Soares C.M.A."/>
            <person name="Souza K.R.L."/>
            <person name="Souza R.C."/>
            <person name="Staats C.C."/>
            <person name="Steffens M.B.R."/>
            <person name="Teixeira S.M.R."/>
            <person name="Urmenyi T.P."/>
            <person name="Vainstein M.H."/>
            <person name="Zuccherato L.W."/>
            <person name="Simpson A.J.G."/>
            <person name="Zaha A."/>
        </authorList>
    </citation>
    <scope>NUCLEOTIDE SEQUENCE [LARGE SCALE GENOMIC DNA]</scope>
    <source>
        <strain>53</strain>
    </source>
</reference>